<name>YRDD_ECOLI</name>
<evidence type="ECO:0000305" key="1"/>
<feature type="chain" id="PRO_0000169506" description="Uncharacterized protein YrdD">
    <location>
        <begin position="1"/>
        <end position="180"/>
    </location>
</feature>
<sequence length="180" mass="19871">MAKSALFTVRNNESCPKCGAELVIRSGKHGPFLGCSQYPACDYVRPLKSSADGHIVKVLEGQVCPACGANLVLRQGRFGMFIGCINYPECEHTELIDKPDETAITCPQCRTGHLVQRRSRYGKTFHSCDRYPECQFAINFKPIAGECPECHYPLLIEKKTAQGVKHFCASKQCGKPVSAE</sequence>
<keyword id="KW-1185">Reference proteome</keyword>
<dbReference type="EMBL" id="U18997">
    <property type="protein sequence ID" value="AAA58080.1"/>
    <property type="status" value="ALT_FRAME"/>
    <property type="molecule type" value="Genomic_DNA"/>
</dbReference>
<dbReference type="EMBL" id="U00096">
    <property type="protein sequence ID" value="AAT48175.1"/>
    <property type="molecule type" value="Genomic_DNA"/>
</dbReference>
<dbReference type="EMBL" id="AP009048">
    <property type="protein sequence ID" value="BAE78008.1"/>
    <property type="molecule type" value="Genomic_DNA"/>
</dbReference>
<dbReference type="PIR" id="F65120">
    <property type="entry name" value="F65120"/>
</dbReference>
<dbReference type="RefSeq" id="WP_001129722.1">
    <property type="nucleotide sequence ID" value="NZ_SSZK01000040.1"/>
</dbReference>
<dbReference type="RefSeq" id="YP_026210.1">
    <property type="nucleotide sequence ID" value="NC_000913.3"/>
</dbReference>
<dbReference type="SMR" id="P45771"/>
<dbReference type="BioGRID" id="4259329">
    <property type="interactions" value="70"/>
</dbReference>
<dbReference type="BioGRID" id="852094">
    <property type="interactions" value="7"/>
</dbReference>
<dbReference type="FunCoup" id="P45771">
    <property type="interactions" value="42"/>
</dbReference>
<dbReference type="IntAct" id="P45771">
    <property type="interactions" value="7"/>
</dbReference>
<dbReference type="STRING" id="511145.b3283"/>
<dbReference type="jPOST" id="P45771"/>
<dbReference type="PaxDb" id="511145-b3283"/>
<dbReference type="EnsemblBacteria" id="AAT48175">
    <property type="protein sequence ID" value="AAT48175"/>
    <property type="gene ID" value="b3283"/>
</dbReference>
<dbReference type="GeneID" id="947782"/>
<dbReference type="KEGG" id="ecj:JW5949"/>
<dbReference type="KEGG" id="eco:b3283"/>
<dbReference type="KEGG" id="ecoc:C3026_17855"/>
<dbReference type="PATRIC" id="fig|1411691.4.peg.3448"/>
<dbReference type="EchoBASE" id="EB2690"/>
<dbReference type="eggNOG" id="COG0551">
    <property type="taxonomic scope" value="Bacteria"/>
</dbReference>
<dbReference type="HOGENOM" id="CLU_104661_0_0_6"/>
<dbReference type="InParanoid" id="P45771"/>
<dbReference type="OMA" id="HYPECDY"/>
<dbReference type="OrthoDB" id="6412825at2"/>
<dbReference type="PhylomeDB" id="P45771"/>
<dbReference type="BioCyc" id="EcoCyc:G7699-MONOMER"/>
<dbReference type="PRO" id="PR:P45771"/>
<dbReference type="Proteomes" id="UP000000625">
    <property type="component" value="Chromosome"/>
</dbReference>
<dbReference type="GO" id="GO:0005694">
    <property type="term" value="C:chromosome"/>
    <property type="evidence" value="ECO:0007669"/>
    <property type="project" value="InterPro"/>
</dbReference>
<dbReference type="GO" id="GO:0003917">
    <property type="term" value="F:DNA topoisomerase type I (single strand cut, ATP-independent) activity"/>
    <property type="evidence" value="ECO:0007669"/>
    <property type="project" value="InterPro"/>
</dbReference>
<dbReference type="GO" id="GO:0005506">
    <property type="term" value="F:iron ion binding"/>
    <property type="evidence" value="ECO:0000314"/>
    <property type="project" value="EcoCyc"/>
</dbReference>
<dbReference type="GO" id="GO:0003697">
    <property type="term" value="F:single-stranded DNA binding"/>
    <property type="evidence" value="ECO:0000314"/>
    <property type="project" value="EcoCyc"/>
</dbReference>
<dbReference type="GO" id="GO:0008270">
    <property type="term" value="F:zinc ion binding"/>
    <property type="evidence" value="ECO:0000314"/>
    <property type="project" value="EcoCyc"/>
</dbReference>
<dbReference type="GO" id="GO:0006265">
    <property type="term" value="P:DNA topological change"/>
    <property type="evidence" value="ECO:0007669"/>
    <property type="project" value="InterPro"/>
</dbReference>
<dbReference type="FunFam" id="3.30.65.10:FF:000006">
    <property type="entry name" value="DNA topoisomerase 1"/>
    <property type="match status" value="1"/>
</dbReference>
<dbReference type="FunFam" id="3.30.65.10:FF:000004">
    <property type="entry name" value="Predicted DNA topoisomerase"/>
    <property type="match status" value="1"/>
</dbReference>
<dbReference type="FunFam" id="3.30.65.10:FF:000005">
    <property type="entry name" value="Predicted DNA topoisomerase"/>
    <property type="match status" value="1"/>
</dbReference>
<dbReference type="Gene3D" id="3.30.65.10">
    <property type="entry name" value="Bacterial Topoisomerase I, domain 1"/>
    <property type="match status" value="3"/>
</dbReference>
<dbReference type="InterPro" id="IPR000380">
    <property type="entry name" value="Topo_IA"/>
</dbReference>
<dbReference type="InterPro" id="IPR013498">
    <property type="entry name" value="Topo_IA_Znf"/>
</dbReference>
<dbReference type="PANTHER" id="PTHR42785:SF1">
    <property type="entry name" value="DNA TOPOISOMERASE"/>
    <property type="match status" value="1"/>
</dbReference>
<dbReference type="PANTHER" id="PTHR42785">
    <property type="entry name" value="DNA TOPOISOMERASE, TYPE IA, CORE"/>
    <property type="match status" value="1"/>
</dbReference>
<dbReference type="Pfam" id="PF01396">
    <property type="entry name" value="Zn_ribbon_Top1"/>
    <property type="match status" value="4"/>
</dbReference>
<dbReference type="SUPFAM" id="SSF57783">
    <property type="entry name" value="Zinc beta-ribbon"/>
    <property type="match status" value="2"/>
</dbReference>
<organism>
    <name type="scientific">Escherichia coli (strain K12)</name>
    <dbReference type="NCBI Taxonomy" id="83333"/>
    <lineage>
        <taxon>Bacteria</taxon>
        <taxon>Pseudomonadati</taxon>
        <taxon>Pseudomonadota</taxon>
        <taxon>Gammaproteobacteria</taxon>
        <taxon>Enterobacterales</taxon>
        <taxon>Enterobacteriaceae</taxon>
        <taxon>Escherichia</taxon>
    </lineage>
</organism>
<proteinExistence type="predicted"/>
<accession>P45771</accession>
<accession>Q2M6U8</accession>
<accession>Q6BF39</accession>
<comment type="similarity">
    <text evidence="1">To H.influenzae HI_0656.1.</text>
</comment>
<comment type="sequence caution" evidence="1">
    <conflict type="frameshift">
        <sequence resource="EMBL-CDS" id="AAA58080"/>
    </conflict>
</comment>
<gene>
    <name type="primary">yrdD</name>
    <name type="ordered locus">b3283</name>
    <name type="ordered locus">JW5949</name>
</gene>
<protein>
    <recommendedName>
        <fullName>Uncharacterized protein YrdD</fullName>
    </recommendedName>
</protein>
<reference key="1">
    <citation type="journal article" date="1997" name="Science">
        <title>The complete genome sequence of Escherichia coli K-12.</title>
        <authorList>
            <person name="Blattner F.R."/>
            <person name="Plunkett G. III"/>
            <person name="Bloch C.A."/>
            <person name="Perna N.T."/>
            <person name="Burland V."/>
            <person name="Riley M."/>
            <person name="Collado-Vides J."/>
            <person name="Glasner J.D."/>
            <person name="Rode C.K."/>
            <person name="Mayhew G.F."/>
            <person name="Gregor J."/>
            <person name="Davis N.W."/>
            <person name="Kirkpatrick H.A."/>
            <person name="Goeden M.A."/>
            <person name="Rose D.J."/>
            <person name="Mau B."/>
            <person name="Shao Y."/>
        </authorList>
    </citation>
    <scope>NUCLEOTIDE SEQUENCE [LARGE SCALE GENOMIC DNA]</scope>
    <source>
        <strain>K12 / MG1655 / ATCC 47076</strain>
    </source>
</reference>
<reference key="2">
    <citation type="journal article" date="2006" name="Nucleic Acids Res.">
        <title>Escherichia coli K-12: a cooperatively developed annotation snapshot -- 2005.</title>
        <authorList>
            <person name="Riley M."/>
            <person name="Abe T."/>
            <person name="Arnaud M.B."/>
            <person name="Berlyn M.K.B."/>
            <person name="Blattner F.R."/>
            <person name="Chaudhuri R.R."/>
            <person name="Glasner J.D."/>
            <person name="Horiuchi T."/>
            <person name="Keseler I.M."/>
            <person name="Kosuge T."/>
            <person name="Mori H."/>
            <person name="Perna N.T."/>
            <person name="Plunkett G. III"/>
            <person name="Rudd K.E."/>
            <person name="Serres M.H."/>
            <person name="Thomas G.H."/>
            <person name="Thomson N.R."/>
            <person name="Wishart D."/>
            <person name="Wanner B.L."/>
        </authorList>
    </citation>
    <scope>SEQUENCE REVISION</scope>
</reference>
<reference key="3">
    <citation type="journal article" date="2006" name="Mol. Syst. Biol.">
        <title>Highly accurate genome sequences of Escherichia coli K-12 strains MG1655 and W3110.</title>
        <authorList>
            <person name="Hayashi K."/>
            <person name="Morooka N."/>
            <person name="Yamamoto Y."/>
            <person name="Fujita K."/>
            <person name="Isono K."/>
            <person name="Choi S."/>
            <person name="Ohtsubo E."/>
            <person name="Baba T."/>
            <person name="Wanner B.L."/>
            <person name="Mori H."/>
            <person name="Horiuchi T."/>
        </authorList>
    </citation>
    <scope>NUCLEOTIDE SEQUENCE [LARGE SCALE GENOMIC DNA]</scope>
    <source>
        <strain>K12 / W3110 / ATCC 27325 / DSM 5911</strain>
    </source>
</reference>